<comment type="function">
    <text evidence="1">This is one of the proteins that bind and probably mediate the attachment of the 5S RNA into the large ribosomal subunit, where it forms part of the central protuberance.</text>
</comment>
<comment type="subunit">
    <text evidence="1">Part of the 50S ribosomal subunit; part of the 5S rRNA/L5/L18/L25 subcomplex. Contacts the 5S and 23S rRNAs.</text>
</comment>
<comment type="similarity">
    <text evidence="1">Belongs to the universal ribosomal protein uL18 family.</text>
</comment>
<gene>
    <name evidence="1" type="primary">rplR</name>
    <name type="ordered locus">LSEI_2487</name>
</gene>
<sequence>MISKPDKNKTRQRRHARVRGKISGTSERPRLNIFRSNKNIYAQLIDDVAGVTLASASTLDKDIKDPENKTAASAQVGALIAKRAVADGHKVVVFDRGGYLYHGRVAALAEAARENGLEF</sequence>
<dbReference type="EMBL" id="CP000423">
    <property type="protein sequence ID" value="ABJ71223.1"/>
    <property type="molecule type" value="Genomic_DNA"/>
</dbReference>
<dbReference type="RefSeq" id="WP_003567533.1">
    <property type="nucleotide sequence ID" value="NC_008526.1"/>
</dbReference>
<dbReference type="RefSeq" id="YP_807665.1">
    <property type="nucleotide sequence ID" value="NC_008526.1"/>
</dbReference>
<dbReference type="SMR" id="Q034Z9"/>
<dbReference type="STRING" id="321967.LSEI_2487"/>
<dbReference type="PaxDb" id="321967-LSEI_2487"/>
<dbReference type="GeneID" id="57091067"/>
<dbReference type="KEGG" id="lca:LSEI_2487"/>
<dbReference type="PATRIC" id="fig|321967.11.peg.2441"/>
<dbReference type="HOGENOM" id="CLU_098841_0_1_9"/>
<dbReference type="Proteomes" id="UP000001651">
    <property type="component" value="Chromosome"/>
</dbReference>
<dbReference type="GO" id="GO:0022625">
    <property type="term" value="C:cytosolic large ribosomal subunit"/>
    <property type="evidence" value="ECO:0007669"/>
    <property type="project" value="TreeGrafter"/>
</dbReference>
<dbReference type="GO" id="GO:0008097">
    <property type="term" value="F:5S rRNA binding"/>
    <property type="evidence" value="ECO:0007669"/>
    <property type="project" value="TreeGrafter"/>
</dbReference>
<dbReference type="GO" id="GO:0003735">
    <property type="term" value="F:structural constituent of ribosome"/>
    <property type="evidence" value="ECO:0007669"/>
    <property type="project" value="InterPro"/>
</dbReference>
<dbReference type="GO" id="GO:0006412">
    <property type="term" value="P:translation"/>
    <property type="evidence" value="ECO:0007669"/>
    <property type="project" value="UniProtKB-UniRule"/>
</dbReference>
<dbReference type="CDD" id="cd00432">
    <property type="entry name" value="Ribosomal_L18_L5e"/>
    <property type="match status" value="1"/>
</dbReference>
<dbReference type="FunFam" id="3.30.420.100:FF:000001">
    <property type="entry name" value="50S ribosomal protein L18"/>
    <property type="match status" value="1"/>
</dbReference>
<dbReference type="Gene3D" id="3.30.420.100">
    <property type="match status" value="1"/>
</dbReference>
<dbReference type="HAMAP" id="MF_01337_B">
    <property type="entry name" value="Ribosomal_uL18_B"/>
    <property type="match status" value="1"/>
</dbReference>
<dbReference type="InterPro" id="IPR004389">
    <property type="entry name" value="Ribosomal_uL18_bac-type"/>
</dbReference>
<dbReference type="InterPro" id="IPR005484">
    <property type="entry name" value="Ribosomal_uL18_bac/euk"/>
</dbReference>
<dbReference type="NCBIfam" id="TIGR00060">
    <property type="entry name" value="L18_bact"/>
    <property type="match status" value="1"/>
</dbReference>
<dbReference type="PANTHER" id="PTHR12899">
    <property type="entry name" value="39S RIBOSOMAL PROTEIN L18, MITOCHONDRIAL"/>
    <property type="match status" value="1"/>
</dbReference>
<dbReference type="PANTHER" id="PTHR12899:SF3">
    <property type="entry name" value="LARGE RIBOSOMAL SUBUNIT PROTEIN UL18M"/>
    <property type="match status" value="1"/>
</dbReference>
<dbReference type="Pfam" id="PF00861">
    <property type="entry name" value="Ribosomal_L18p"/>
    <property type="match status" value="1"/>
</dbReference>
<dbReference type="SUPFAM" id="SSF53137">
    <property type="entry name" value="Translational machinery components"/>
    <property type="match status" value="1"/>
</dbReference>
<reference key="1">
    <citation type="journal article" date="2006" name="Proc. Natl. Acad. Sci. U.S.A.">
        <title>Comparative genomics of the lactic acid bacteria.</title>
        <authorList>
            <person name="Makarova K.S."/>
            <person name="Slesarev A."/>
            <person name="Wolf Y.I."/>
            <person name="Sorokin A."/>
            <person name="Mirkin B."/>
            <person name="Koonin E.V."/>
            <person name="Pavlov A."/>
            <person name="Pavlova N."/>
            <person name="Karamychev V."/>
            <person name="Polouchine N."/>
            <person name="Shakhova V."/>
            <person name="Grigoriev I."/>
            <person name="Lou Y."/>
            <person name="Rohksar D."/>
            <person name="Lucas S."/>
            <person name="Huang K."/>
            <person name="Goodstein D.M."/>
            <person name="Hawkins T."/>
            <person name="Plengvidhya V."/>
            <person name="Welker D."/>
            <person name="Hughes J."/>
            <person name="Goh Y."/>
            <person name="Benson A."/>
            <person name="Baldwin K."/>
            <person name="Lee J.-H."/>
            <person name="Diaz-Muniz I."/>
            <person name="Dosti B."/>
            <person name="Smeianov V."/>
            <person name="Wechter W."/>
            <person name="Barabote R."/>
            <person name="Lorca G."/>
            <person name="Altermann E."/>
            <person name="Barrangou R."/>
            <person name="Ganesan B."/>
            <person name="Xie Y."/>
            <person name="Rawsthorne H."/>
            <person name="Tamir D."/>
            <person name="Parker C."/>
            <person name="Breidt F."/>
            <person name="Broadbent J.R."/>
            <person name="Hutkins R."/>
            <person name="O'Sullivan D."/>
            <person name="Steele J."/>
            <person name="Unlu G."/>
            <person name="Saier M.H. Jr."/>
            <person name="Klaenhammer T."/>
            <person name="Richardson P."/>
            <person name="Kozyavkin S."/>
            <person name="Weimer B.C."/>
            <person name="Mills D.A."/>
        </authorList>
    </citation>
    <scope>NUCLEOTIDE SEQUENCE [LARGE SCALE GENOMIC DNA]</scope>
    <source>
        <strain>ATCC 334 / BCRC 17002 / CCUG 31169 / CIP 107868 / KCTC 3260 / NRRL B-441</strain>
    </source>
</reference>
<feature type="chain" id="PRO_1000053043" description="Large ribosomal subunit protein uL18">
    <location>
        <begin position="1"/>
        <end position="119"/>
    </location>
</feature>
<feature type="region of interest" description="Disordered" evidence="2">
    <location>
        <begin position="1"/>
        <end position="23"/>
    </location>
</feature>
<feature type="compositionally biased region" description="Basic residues" evidence="2">
    <location>
        <begin position="10"/>
        <end position="20"/>
    </location>
</feature>
<proteinExistence type="inferred from homology"/>
<keyword id="KW-1185">Reference proteome</keyword>
<keyword id="KW-0687">Ribonucleoprotein</keyword>
<keyword id="KW-0689">Ribosomal protein</keyword>
<keyword id="KW-0694">RNA-binding</keyword>
<keyword id="KW-0699">rRNA-binding</keyword>
<name>RL18_LACP3</name>
<protein>
    <recommendedName>
        <fullName evidence="1">Large ribosomal subunit protein uL18</fullName>
    </recommendedName>
    <alternativeName>
        <fullName evidence="3">50S ribosomal protein L18</fullName>
    </alternativeName>
</protein>
<accession>Q034Z9</accession>
<evidence type="ECO:0000255" key="1">
    <source>
        <dbReference type="HAMAP-Rule" id="MF_01337"/>
    </source>
</evidence>
<evidence type="ECO:0000256" key="2">
    <source>
        <dbReference type="SAM" id="MobiDB-lite"/>
    </source>
</evidence>
<evidence type="ECO:0000305" key="3"/>
<organism>
    <name type="scientific">Lacticaseibacillus paracasei (strain ATCC 334 / BCRC 17002 / CCUG 31169 / CIP 107868 / KCTC 3260 / NRRL B-441)</name>
    <name type="common">Lactobacillus paracasei</name>
    <dbReference type="NCBI Taxonomy" id="321967"/>
    <lineage>
        <taxon>Bacteria</taxon>
        <taxon>Bacillati</taxon>
        <taxon>Bacillota</taxon>
        <taxon>Bacilli</taxon>
        <taxon>Lactobacillales</taxon>
        <taxon>Lactobacillaceae</taxon>
        <taxon>Lacticaseibacillus</taxon>
    </lineage>
</organism>